<protein>
    <recommendedName>
        <fullName evidence="1">Acetate kinase</fullName>
        <ecNumber evidence="1">2.7.2.1</ecNumber>
    </recommendedName>
    <alternativeName>
        <fullName evidence="1">Acetokinase</fullName>
    </alternativeName>
</protein>
<proteinExistence type="inferred from homology"/>
<organism>
    <name type="scientific">Thermosipho africanus (strain TCF52B)</name>
    <dbReference type="NCBI Taxonomy" id="484019"/>
    <lineage>
        <taxon>Bacteria</taxon>
        <taxon>Thermotogati</taxon>
        <taxon>Thermotogota</taxon>
        <taxon>Thermotogae</taxon>
        <taxon>Thermotogales</taxon>
        <taxon>Fervidobacteriaceae</taxon>
        <taxon>Thermosipho</taxon>
    </lineage>
</organism>
<feature type="chain" id="PRO_1000116393" description="Acetate kinase">
    <location>
        <begin position="1"/>
        <end position="406"/>
    </location>
</feature>
<feature type="active site" description="Proton donor/acceptor" evidence="1">
    <location>
        <position position="147"/>
    </location>
</feature>
<feature type="binding site" evidence="1">
    <location>
        <position position="7"/>
    </location>
    <ligand>
        <name>Mg(2+)</name>
        <dbReference type="ChEBI" id="CHEBI:18420"/>
    </ligand>
</feature>
<feature type="binding site" evidence="1">
    <location>
        <position position="14"/>
    </location>
    <ligand>
        <name>ATP</name>
        <dbReference type="ChEBI" id="CHEBI:30616"/>
    </ligand>
</feature>
<feature type="binding site" evidence="1">
    <location>
        <position position="90"/>
    </location>
    <ligand>
        <name>substrate</name>
    </ligand>
</feature>
<feature type="binding site" evidence="1">
    <location>
        <begin position="207"/>
        <end position="211"/>
    </location>
    <ligand>
        <name>ATP</name>
        <dbReference type="ChEBI" id="CHEBI:30616"/>
    </ligand>
</feature>
<feature type="binding site" evidence="1">
    <location>
        <begin position="283"/>
        <end position="285"/>
    </location>
    <ligand>
        <name>ATP</name>
        <dbReference type="ChEBI" id="CHEBI:30616"/>
    </ligand>
</feature>
<feature type="binding site" evidence="1">
    <location>
        <begin position="331"/>
        <end position="335"/>
    </location>
    <ligand>
        <name>ATP</name>
        <dbReference type="ChEBI" id="CHEBI:30616"/>
    </ligand>
</feature>
<feature type="binding site" evidence="1">
    <location>
        <position position="385"/>
    </location>
    <ligand>
        <name>Mg(2+)</name>
        <dbReference type="ChEBI" id="CHEBI:18420"/>
    </ligand>
</feature>
<feature type="site" description="Transition state stabilizer" evidence="1">
    <location>
        <position position="179"/>
    </location>
</feature>
<feature type="site" description="Transition state stabilizer" evidence="1">
    <location>
        <position position="240"/>
    </location>
</feature>
<reference key="1">
    <citation type="journal article" date="2009" name="J. Bacteriol.">
        <title>The genome of Thermosipho africanus TCF52B: lateral genetic connections to the Firmicutes and Archaea.</title>
        <authorList>
            <person name="Nesboe C.L."/>
            <person name="Bapteste E."/>
            <person name="Curtis B."/>
            <person name="Dahle H."/>
            <person name="Lopez P."/>
            <person name="Macleod D."/>
            <person name="Dlutek M."/>
            <person name="Bowman S."/>
            <person name="Zhaxybayeva O."/>
            <person name="Birkeland N.-K."/>
            <person name="Doolittle W.F."/>
        </authorList>
    </citation>
    <scope>NUCLEOTIDE SEQUENCE [LARGE SCALE GENOMIC DNA]</scope>
    <source>
        <strain>TCF52B</strain>
    </source>
</reference>
<comment type="function">
    <text evidence="1">Catalyzes the formation of acetyl phosphate from acetate and ATP. Can also catalyze the reverse reaction.</text>
</comment>
<comment type="catalytic activity">
    <reaction evidence="1">
        <text>acetate + ATP = acetyl phosphate + ADP</text>
        <dbReference type="Rhea" id="RHEA:11352"/>
        <dbReference type="ChEBI" id="CHEBI:22191"/>
        <dbReference type="ChEBI" id="CHEBI:30089"/>
        <dbReference type="ChEBI" id="CHEBI:30616"/>
        <dbReference type="ChEBI" id="CHEBI:456216"/>
        <dbReference type="EC" id="2.7.2.1"/>
    </reaction>
</comment>
<comment type="cofactor">
    <cofactor evidence="1">
        <name>Mg(2+)</name>
        <dbReference type="ChEBI" id="CHEBI:18420"/>
    </cofactor>
    <cofactor evidence="1">
        <name>Mn(2+)</name>
        <dbReference type="ChEBI" id="CHEBI:29035"/>
    </cofactor>
    <text evidence="1">Mg(2+). Can also accept Mn(2+).</text>
</comment>
<comment type="pathway">
    <text evidence="1">Metabolic intermediate biosynthesis; acetyl-CoA biosynthesis; acetyl-CoA from acetate: step 1/2.</text>
</comment>
<comment type="subunit">
    <text evidence="1">Homodimer.</text>
</comment>
<comment type="subcellular location">
    <subcellularLocation>
        <location evidence="1">Cytoplasm</location>
    </subcellularLocation>
</comment>
<comment type="similarity">
    <text evidence="1">Belongs to the acetokinase family.</text>
</comment>
<keyword id="KW-0067">ATP-binding</keyword>
<keyword id="KW-0963">Cytoplasm</keyword>
<keyword id="KW-0418">Kinase</keyword>
<keyword id="KW-0460">Magnesium</keyword>
<keyword id="KW-0479">Metal-binding</keyword>
<keyword id="KW-0547">Nucleotide-binding</keyword>
<keyword id="KW-1185">Reference proteome</keyword>
<keyword id="KW-0808">Transferase</keyword>
<accession>B7IDH3</accession>
<dbReference type="EC" id="2.7.2.1" evidence="1"/>
<dbReference type="EMBL" id="CP001185">
    <property type="protein sequence ID" value="ACJ76050.1"/>
    <property type="molecule type" value="Genomic_DNA"/>
</dbReference>
<dbReference type="RefSeq" id="WP_004102380.1">
    <property type="nucleotide sequence ID" value="NC_011653.1"/>
</dbReference>
<dbReference type="SMR" id="B7IDH3"/>
<dbReference type="STRING" id="484019.THA_1612"/>
<dbReference type="KEGG" id="taf:THA_1612"/>
<dbReference type="eggNOG" id="COG0282">
    <property type="taxonomic scope" value="Bacteria"/>
</dbReference>
<dbReference type="HOGENOM" id="CLU_020352_0_1_0"/>
<dbReference type="OrthoDB" id="9802453at2"/>
<dbReference type="UniPathway" id="UPA00340">
    <property type="reaction ID" value="UER00458"/>
</dbReference>
<dbReference type="Proteomes" id="UP000002453">
    <property type="component" value="Chromosome"/>
</dbReference>
<dbReference type="GO" id="GO:0005737">
    <property type="term" value="C:cytoplasm"/>
    <property type="evidence" value="ECO:0007669"/>
    <property type="project" value="UniProtKB-SubCell"/>
</dbReference>
<dbReference type="GO" id="GO:0008776">
    <property type="term" value="F:acetate kinase activity"/>
    <property type="evidence" value="ECO:0007669"/>
    <property type="project" value="UniProtKB-UniRule"/>
</dbReference>
<dbReference type="GO" id="GO:0005524">
    <property type="term" value="F:ATP binding"/>
    <property type="evidence" value="ECO:0007669"/>
    <property type="project" value="UniProtKB-KW"/>
</dbReference>
<dbReference type="GO" id="GO:0000287">
    <property type="term" value="F:magnesium ion binding"/>
    <property type="evidence" value="ECO:0007669"/>
    <property type="project" value="UniProtKB-UniRule"/>
</dbReference>
<dbReference type="GO" id="GO:0006083">
    <property type="term" value="P:acetate metabolic process"/>
    <property type="evidence" value="ECO:0007669"/>
    <property type="project" value="TreeGrafter"/>
</dbReference>
<dbReference type="GO" id="GO:0006085">
    <property type="term" value="P:acetyl-CoA biosynthetic process"/>
    <property type="evidence" value="ECO:0007669"/>
    <property type="project" value="UniProtKB-UniRule"/>
</dbReference>
<dbReference type="CDD" id="cd24010">
    <property type="entry name" value="ASKHA_NBD_AcK_PK"/>
    <property type="match status" value="1"/>
</dbReference>
<dbReference type="Gene3D" id="3.30.420.40">
    <property type="match status" value="2"/>
</dbReference>
<dbReference type="HAMAP" id="MF_00020">
    <property type="entry name" value="Acetate_kinase"/>
    <property type="match status" value="1"/>
</dbReference>
<dbReference type="InterPro" id="IPR004372">
    <property type="entry name" value="Ac/propionate_kinase"/>
</dbReference>
<dbReference type="InterPro" id="IPR000890">
    <property type="entry name" value="Aliphatic_acid_kin_short-chain"/>
</dbReference>
<dbReference type="InterPro" id="IPR023865">
    <property type="entry name" value="Aliphatic_acid_kinase_CS"/>
</dbReference>
<dbReference type="InterPro" id="IPR043129">
    <property type="entry name" value="ATPase_NBD"/>
</dbReference>
<dbReference type="NCBIfam" id="TIGR00016">
    <property type="entry name" value="ackA"/>
    <property type="match status" value="1"/>
</dbReference>
<dbReference type="PANTHER" id="PTHR21060">
    <property type="entry name" value="ACETATE KINASE"/>
    <property type="match status" value="1"/>
</dbReference>
<dbReference type="PANTHER" id="PTHR21060:SF15">
    <property type="entry name" value="ACETATE KINASE-RELATED"/>
    <property type="match status" value="1"/>
</dbReference>
<dbReference type="Pfam" id="PF00871">
    <property type="entry name" value="Acetate_kinase"/>
    <property type="match status" value="1"/>
</dbReference>
<dbReference type="PIRSF" id="PIRSF000722">
    <property type="entry name" value="Acetate_prop_kin"/>
    <property type="match status" value="1"/>
</dbReference>
<dbReference type="PRINTS" id="PR00471">
    <property type="entry name" value="ACETATEKNASE"/>
</dbReference>
<dbReference type="SUPFAM" id="SSF53067">
    <property type="entry name" value="Actin-like ATPase domain"/>
    <property type="match status" value="2"/>
</dbReference>
<dbReference type="PROSITE" id="PS01075">
    <property type="entry name" value="ACETATE_KINASE_1"/>
    <property type="match status" value="1"/>
</dbReference>
<dbReference type="PROSITE" id="PS01076">
    <property type="entry name" value="ACETATE_KINASE_2"/>
    <property type="match status" value="1"/>
</dbReference>
<name>ACKA_THEAB</name>
<evidence type="ECO:0000255" key="1">
    <source>
        <dbReference type="HAMAP-Rule" id="MF_00020"/>
    </source>
</evidence>
<gene>
    <name evidence="1" type="primary">ackA</name>
    <name type="ordered locus">THA_1612</name>
</gene>
<sequence>MIVLVVNSGSSSIKYQLLDMDNEKVLCKGLAERIGIPGSRIVHKKDGEKFVIEHPMANHDEALQLVLQTLKDEKMGAIKDFKEIDAVGHRVVHGGEKFSGSVLIDDEVINAIEEFSYLAPLHNPPNLMGIKAIMKLLPGVPNVAVFDTAFHAKMPKKAYLYAIPYEYYEKYKIRRYGFHGTSHRYVSRRTAEILGLDYNKSKIITVHLGNGASIAAVMNGKSVDTSMGFTPLEGLVMGTRSGDLDPSIVTFLIEKEGLSPEEVYTILNKKSGVLGLTSNFSSDMRDIEDKALENDPLCRLVLDIYEYRIAKYIGAYVAAMNGVDAISFTAGVGENSPITREEICENYLSYLGIKIDKEKNNVKGEERIISTPDSKVKVLIVPTNEELMIARDTKEIIEKGIKKLEY</sequence>